<name>PDTAS_MYCTU</name>
<dbReference type="EC" id="2.7.13.3" evidence="6"/>
<dbReference type="EMBL" id="AL123456">
    <property type="protein sequence ID" value="CCP46036.1"/>
    <property type="molecule type" value="Genomic_DNA"/>
</dbReference>
<dbReference type="PIR" id="E70596">
    <property type="entry name" value="E70596"/>
</dbReference>
<dbReference type="RefSeq" id="NP_217736.1">
    <property type="nucleotide sequence ID" value="NC_000962.3"/>
</dbReference>
<dbReference type="RefSeq" id="WP_003416886.1">
    <property type="nucleotide sequence ID" value="NZ_NVQJ01000003.1"/>
</dbReference>
<dbReference type="PDB" id="2YKF">
    <property type="method" value="X-ray"/>
    <property type="resolution" value="2.00 A"/>
    <property type="chains" value="A=1-303"/>
</dbReference>
<dbReference type="PDB" id="2YKH">
    <property type="method" value="X-ray"/>
    <property type="resolution" value="2.78 A"/>
    <property type="chains" value="A/B=1-303"/>
</dbReference>
<dbReference type="PDBsum" id="2YKF"/>
<dbReference type="PDBsum" id="2YKH"/>
<dbReference type="SMR" id="P9WGL5"/>
<dbReference type="STRING" id="83332.Rv3220c"/>
<dbReference type="iPTMnet" id="P9WGL5"/>
<dbReference type="PaxDb" id="83332-Rv3220c"/>
<dbReference type="DNASU" id="888801"/>
<dbReference type="GeneID" id="888801"/>
<dbReference type="KEGG" id="mtu:Rv3220c"/>
<dbReference type="KEGG" id="mtv:RVBD_3220c"/>
<dbReference type="TubercuList" id="Rv3220c"/>
<dbReference type="eggNOG" id="COG3920">
    <property type="taxonomic scope" value="Bacteria"/>
</dbReference>
<dbReference type="InParanoid" id="P9WGL5"/>
<dbReference type="OrthoDB" id="9767435at2"/>
<dbReference type="PhylomeDB" id="P9WGL5"/>
<dbReference type="EvolutionaryTrace" id="P9WGL5"/>
<dbReference type="PHI-base" id="PHI:3621"/>
<dbReference type="Proteomes" id="UP000001584">
    <property type="component" value="Chromosome"/>
</dbReference>
<dbReference type="GO" id="GO:0005737">
    <property type="term" value="C:cytoplasm"/>
    <property type="evidence" value="ECO:0007669"/>
    <property type="project" value="UniProtKB-SubCell"/>
</dbReference>
<dbReference type="GO" id="GO:0005524">
    <property type="term" value="F:ATP binding"/>
    <property type="evidence" value="ECO:0000314"/>
    <property type="project" value="MTBBASE"/>
</dbReference>
<dbReference type="GO" id="GO:0000155">
    <property type="term" value="F:phosphorelay sensor kinase activity"/>
    <property type="evidence" value="ECO:0000314"/>
    <property type="project" value="MTBBASE"/>
</dbReference>
<dbReference type="GO" id="GO:0004672">
    <property type="term" value="F:protein kinase activity"/>
    <property type="evidence" value="ECO:0000314"/>
    <property type="project" value="MTBBASE"/>
</dbReference>
<dbReference type="GO" id="GO:0000160">
    <property type="term" value="P:phosphorelay signal transduction system"/>
    <property type="evidence" value="ECO:0000314"/>
    <property type="project" value="MTBBASE"/>
</dbReference>
<dbReference type="CDD" id="cd16951">
    <property type="entry name" value="HATPase_EL346-LOV-HK-like"/>
    <property type="match status" value="1"/>
</dbReference>
<dbReference type="FunFam" id="3.30.565.10:FF:000071">
    <property type="entry name" value="Sensor histidine kinase"/>
    <property type="match status" value="1"/>
</dbReference>
<dbReference type="Gene3D" id="3.30.450.280">
    <property type="entry name" value="GAF domain"/>
    <property type="match status" value="1"/>
</dbReference>
<dbReference type="Gene3D" id="3.30.565.10">
    <property type="entry name" value="Histidine kinase-like ATPase, C-terminal domain"/>
    <property type="match status" value="1"/>
</dbReference>
<dbReference type="Gene3D" id="3.30.450.20">
    <property type="entry name" value="PAS domain"/>
    <property type="match status" value="1"/>
</dbReference>
<dbReference type="InterPro" id="IPR038424">
    <property type="entry name" value="H_kinase_PdtaS_GAF_sf"/>
</dbReference>
<dbReference type="InterPro" id="IPR036890">
    <property type="entry name" value="HATPase_C_sf"/>
</dbReference>
<dbReference type="InterPro" id="IPR005467">
    <property type="entry name" value="His_kinase_dom"/>
</dbReference>
<dbReference type="InterPro" id="IPR035965">
    <property type="entry name" value="PAS-like_dom_sf"/>
</dbReference>
<dbReference type="InterPro" id="IPR022066">
    <property type="entry name" value="PdtaS_GAF"/>
</dbReference>
<dbReference type="InterPro" id="IPR011495">
    <property type="entry name" value="Sig_transdc_His_kin_sub2_dim/P"/>
</dbReference>
<dbReference type="PANTHER" id="PTHR41523:SF8">
    <property type="entry name" value="ETHYLENE RESPONSE SENSOR PROTEIN"/>
    <property type="match status" value="1"/>
</dbReference>
<dbReference type="PANTHER" id="PTHR41523">
    <property type="entry name" value="TWO-COMPONENT SYSTEM SENSOR PROTEIN"/>
    <property type="match status" value="1"/>
</dbReference>
<dbReference type="Pfam" id="PF12282">
    <property type="entry name" value="GAF_PdtaS"/>
    <property type="match status" value="1"/>
</dbReference>
<dbReference type="Pfam" id="PF02518">
    <property type="entry name" value="HATPase_c"/>
    <property type="match status" value="1"/>
</dbReference>
<dbReference type="Pfam" id="PF07568">
    <property type="entry name" value="HisKA_2"/>
    <property type="match status" value="1"/>
</dbReference>
<dbReference type="SMART" id="SM00387">
    <property type="entry name" value="HATPase_c"/>
    <property type="match status" value="1"/>
</dbReference>
<dbReference type="SUPFAM" id="SSF55874">
    <property type="entry name" value="ATPase domain of HSP90 chaperone/DNA topoisomerase II/histidine kinase"/>
    <property type="match status" value="1"/>
</dbReference>
<dbReference type="SUPFAM" id="SSF55785">
    <property type="entry name" value="PYP-like sensor domain (PAS domain)"/>
    <property type="match status" value="1"/>
</dbReference>
<dbReference type="PROSITE" id="PS50109">
    <property type="entry name" value="HIS_KIN"/>
    <property type="match status" value="1"/>
</dbReference>
<keyword id="KW-0002">3D-structure</keyword>
<keyword id="KW-0067">ATP-binding</keyword>
<keyword id="KW-0963">Cytoplasm</keyword>
<keyword id="KW-0418">Kinase</keyword>
<keyword id="KW-0547">Nucleotide-binding</keyword>
<keyword id="KW-0597">Phosphoprotein</keyword>
<keyword id="KW-1185">Reference proteome</keyword>
<keyword id="KW-0346">Stress response</keyword>
<keyword id="KW-0808">Transferase</keyword>
<keyword id="KW-0902">Two-component regulatory system</keyword>
<sequence length="501" mass="54012">MSTLGDLLAEHTVLPGSAVDHLHAVVGEWQLLADLSFADYLMWVRRDDGVLVCVAQCRPNTGPTVVHTDAVGTVVAANSMPLVAATFSGGVPGREGAVGQQNSCQHDGHSVEVSPVRFGDQVVAVLTRHQPELAARRRSGHLETAYRLCATDLLRMLAEGTFPDAGDVAMSRSSPRAGDGFIRLDVDGVVSYASPNALSAYHRMGLTTELEGVNLIDATRPLISDPFEAHEVDEHVQDLLAGDGKGMRMEVDAGGATVLLRTLPLVVAGRNVGAAILIRDVTEVKRRDRALISKDATIREIHHRVKNNLQTVAALLRLQARRTSNAEGREALIESVRRVSSIALVHDALSMSVDEQVNLDEVIDRILPIMNDVASVDRPIRINRVGDLGVLDSDRATALIMVITELVQNAIEHAFDPAAAEGSVTIRAERSARWLDVVVHDDGLGLPQGFSLEKSDSLGLQIVRTLVSAELDGSLGMRDARERGTDVVLRVPVGRRGRLML</sequence>
<protein>
    <recommendedName>
        <fullName evidence="10">Sensor histidine kinase PdtaS</fullName>
        <ecNumber evidence="6">2.7.13.3</ecNumber>
    </recommendedName>
    <alternativeName>
        <fullName evidence="9">c-di-GMP sensing sensor histidine kinase PdtaS</fullName>
    </alternativeName>
</protein>
<evidence type="ECO:0000255" key="1"/>
<evidence type="ECO:0000255" key="2">
    <source>
        <dbReference type="PROSITE-ProRule" id="PRU00107"/>
    </source>
</evidence>
<evidence type="ECO:0000269" key="3">
    <source>
    </source>
</evidence>
<evidence type="ECO:0000269" key="4">
    <source>
    </source>
</evidence>
<evidence type="ECO:0000269" key="5">
    <source>
    </source>
</evidence>
<evidence type="ECO:0000269" key="6">
    <source>
    </source>
</evidence>
<evidence type="ECO:0000269" key="7">
    <source>
    </source>
</evidence>
<evidence type="ECO:0000303" key="8">
    <source>
    </source>
</evidence>
<evidence type="ECO:0000303" key="9">
    <source>
    </source>
</evidence>
<evidence type="ECO:0000305" key="10"/>
<evidence type="ECO:0000305" key="11">
    <source>
    </source>
</evidence>
<evidence type="ECO:0007744" key="12">
    <source>
        <dbReference type="PDB" id="2YKF"/>
    </source>
</evidence>
<evidence type="ECO:0007744" key="13">
    <source>
        <dbReference type="PDB" id="2YKH"/>
    </source>
</evidence>
<evidence type="ECO:0007829" key="14">
    <source>
        <dbReference type="PDB" id="2YKF"/>
    </source>
</evidence>
<evidence type="ECO:0007829" key="15">
    <source>
        <dbReference type="PDB" id="2YKH"/>
    </source>
</evidence>
<comment type="function">
    <text evidence="3 6 7">Member of the two-component regulatory system PdtaR/PdtaS (PubMed:16026786, PubMed:33772870, PubMed:34003742). This two-component system plays an essential role in mycobacterial adaptation to poor nutrient conditions (PubMed:33772870). Nutrient deprivation results in increasing intracellular concentrations of cyclic diguanosine monophosphate (c-di-GMP), which binds to the PdtaS sensor and promotes its autophosphorylation, leading to the activation of the signaling cascade (PubMed:33772870). The phosphate group is then transferred to PdtaR (PubMed:16026786, PubMed:33772870, PubMed:34003742).</text>
</comment>
<comment type="function">
    <text evidence="7">In addition, the PdtaR/PdtaS two-component system controls copper and nitric oxide (NO) resistance downstream of the intramembrane protease Rip1 (PubMed:34003742). This coupled Rip1/PdtaS/PdtaR circuit controls NO resistance and acute lung infection in mice by relieving PdtaR/PdtaS-mediated repression of isonitrile chalkophore biosynthesis (PubMed:34003742). Two signals are required to fully inactivate the PdtaR/PdtaS system and mediate NO resistance: a cytoplasmic inhibitory signal through the PdtaS kinase mediated by direct sensing of NO and the production of PPE1-5', an NO-induced small RNA, to sequester PdtaR (PubMed:34003742).</text>
</comment>
<comment type="catalytic activity">
    <reaction evidence="6">
        <text>ATP + protein L-histidine = ADP + protein N-phospho-L-histidine.</text>
        <dbReference type="EC" id="2.7.13.3"/>
    </reaction>
</comment>
<comment type="activity regulation">
    <text evidence="6 7">Binding to c-di-GMP activates PdtaS autophosphorylation and by extension phosphotransfer to PdtaR (PubMed:33772870). At the opposite, autophosphorylation and signaling cascade are inhibited by NO, copper and zinc (PubMed:34003742). Activity is not inhibited by calcium or iron (PubMed:34003742). Full inhibition of PdtaR/PdtaS signaling cascade requires the transduction of a cell surface signal by the intramembrane protease Rip1 (PubMed:34003742).</text>
</comment>
<comment type="subunit">
    <text evidence="5">The N-terminal sensor region is a monomer in solution, but it forms non-covalently linked dimers over time.</text>
</comment>
<comment type="subcellular location">
    <subcellularLocation>
        <location evidence="11">Cytoplasm</location>
    </subcellularLocation>
</comment>
<comment type="domain">
    <text evidence="5 6 7">The N-terminal sensor region consists of closely linked GAF and PAS domains (PubMed:22115998). Binds c-di-GMP via the GAF domain (PubMed:33772870). Copper and NO are detected through a dicysteine motif in the GAF domain (PubMed:34003742).</text>
</comment>
<comment type="PTM">
    <text evidence="3 6 7">Autophosphorylated.</text>
</comment>
<comment type="miscellaneous">
    <text evidence="4">Was identified as a high-confidence drug target.</text>
</comment>
<organism>
    <name type="scientific">Mycobacterium tuberculosis (strain ATCC 25618 / H37Rv)</name>
    <dbReference type="NCBI Taxonomy" id="83332"/>
    <lineage>
        <taxon>Bacteria</taxon>
        <taxon>Bacillati</taxon>
        <taxon>Actinomycetota</taxon>
        <taxon>Actinomycetes</taxon>
        <taxon>Mycobacteriales</taxon>
        <taxon>Mycobacteriaceae</taxon>
        <taxon>Mycobacterium</taxon>
        <taxon>Mycobacterium tuberculosis complex</taxon>
    </lineage>
</organism>
<accession>P9WGL5</accession>
<accession>L0TDI0</accession>
<accession>O05846</accession>
<accession>Q7D5W7</accession>
<gene>
    <name evidence="8" type="primary">pdtaS</name>
    <name type="ordered locus">Rv3220c</name>
</gene>
<feature type="chain" id="PRO_0000386596" description="Sensor histidine kinase PdtaS">
    <location>
        <begin position="1"/>
        <end position="501"/>
    </location>
</feature>
<feature type="domain" description="Histidine kinase" evidence="2">
    <location>
        <begin position="300"/>
        <end position="495"/>
    </location>
</feature>
<feature type="region of interest" description="GAF" evidence="1">
    <location>
        <begin position="4"/>
        <end position="150"/>
    </location>
</feature>
<feature type="region of interest" description="PAS-like" evidence="1">
    <location>
        <begin position="179"/>
        <end position="291"/>
    </location>
</feature>
<feature type="modified residue" description="Phosphohistidine; by autocatalysis" evidence="6">
    <location>
        <position position="303"/>
    </location>
</feature>
<feature type="mutagenesis site" description="Loss of activity, cannot rescue a deletion mutant." evidence="6">
    <original>W</original>
    <variation>A</variation>
    <location>
        <position position="43"/>
    </location>
</feature>
<feature type="mutagenesis site" description="Resistant to copper and NO inhibition." evidence="7">
    <original>C</original>
    <variation>A</variation>
    <location>
        <position position="53"/>
    </location>
</feature>
<feature type="mutagenesis site" description="Resistant to NO inhibition." evidence="7">
    <original>C</original>
    <variation>A</variation>
    <location>
        <position position="57"/>
    </location>
</feature>
<feature type="mutagenesis site" description="Loss of activity, cannot rescue a deletion mutant." evidence="6">
    <original>H</original>
    <variation>Q</variation>
    <location>
        <position position="303"/>
    </location>
</feature>
<feature type="helix" evidence="14">
    <location>
        <begin position="4"/>
        <end position="11"/>
    </location>
</feature>
<feature type="helix" evidence="14">
    <location>
        <begin position="16"/>
        <end position="36"/>
    </location>
</feature>
<feature type="strand" evidence="14">
    <location>
        <begin position="38"/>
        <end position="45"/>
    </location>
</feature>
<feature type="strand" evidence="14">
    <location>
        <begin position="51"/>
        <end position="57"/>
    </location>
</feature>
<feature type="strand" evidence="14">
    <location>
        <begin position="60"/>
        <end position="62"/>
    </location>
</feature>
<feature type="helix" evidence="14">
    <location>
        <begin position="77"/>
        <end position="79"/>
    </location>
</feature>
<feature type="helix" evidence="14">
    <location>
        <begin position="81"/>
        <end position="88"/>
    </location>
</feature>
<feature type="strand" evidence="14">
    <location>
        <begin position="112"/>
        <end position="118"/>
    </location>
</feature>
<feature type="strand" evidence="14">
    <location>
        <begin position="121"/>
        <end position="129"/>
    </location>
</feature>
<feature type="helix" evidence="14">
    <location>
        <begin position="133"/>
        <end position="135"/>
    </location>
</feature>
<feature type="helix" evidence="14">
    <location>
        <begin position="141"/>
        <end position="158"/>
    </location>
</feature>
<feature type="strand" evidence="15">
    <location>
        <begin position="165"/>
        <end position="168"/>
    </location>
</feature>
<feature type="helix" evidence="14">
    <location>
        <begin position="177"/>
        <end position="179"/>
    </location>
</feature>
<feature type="strand" evidence="14">
    <location>
        <begin position="181"/>
        <end position="184"/>
    </location>
</feature>
<feature type="strand" evidence="14">
    <location>
        <begin position="188"/>
        <end position="193"/>
    </location>
</feature>
<feature type="helix" evidence="14">
    <location>
        <begin position="195"/>
        <end position="203"/>
    </location>
</feature>
<feature type="helix" evidence="14">
    <location>
        <begin position="215"/>
        <end position="219"/>
    </location>
</feature>
<feature type="helix" evidence="14">
    <location>
        <begin position="220"/>
        <end position="222"/>
    </location>
</feature>
<feature type="strand" evidence="14">
    <location>
        <begin position="223"/>
        <end position="225"/>
    </location>
</feature>
<feature type="helix" evidence="14">
    <location>
        <begin position="226"/>
        <end position="240"/>
    </location>
</feature>
<feature type="strand" evidence="14">
    <location>
        <begin position="248"/>
        <end position="253"/>
    </location>
</feature>
<feature type="strand" evidence="14">
    <location>
        <begin position="256"/>
        <end position="267"/>
    </location>
</feature>
<feature type="strand" evidence="14">
    <location>
        <begin position="270"/>
        <end position="280"/>
    </location>
</feature>
<feature type="helix" evidence="14">
    <location>
        <begin position="282"/>
        <end position="285"/>
    </location>
</feature>
<reference key="1">
    <citation type="journal article" date="1998" name="Nature">
        <title>Deciphering the biology of Mycobacterium tuberculosis from the complete genome sequence.</title>
        <authorList>
            <person name="Cole S.T."/>
            <person name="Brosch R."/>
            <person name="Parkhill J."/>
            <person name="Garnier T."/>
            <person name="Churcher C.M."/>
            <person name="Harris D.E."/>
            <person name="Gordon S.V."/>
            <person name="Eiglmeier K."/>
            <person name="Gas S."/>
            <person name="Barry C.E. III"/>
            <person name="Tekaia F."/>
            <person name="Badcock K."/>
            <person name="Basham D."/>
            <person name="Brown D."/>
            <person name="Chillingworth T."/>
            <person name="Connor R."/>
            <person name="Davies R.M."/>
            <person name="Devlin K."/>
            <person name="Feltwell T."/>
            <person name="Gentles S."/>
            <person name="Hamlin N."/>
            <person name="Holroyd S."/>
            <person name="Hornsby T."/>
            <person name="Jagels K."/>
            <person name="Krogh A."/>
            <person name="McLean J."/>
            <person name="Moule S."/>
            <person name="Murphy L.D."/>
            <person name="Oliver S."/>
            <person name="Osborne J."/>
            <person name="Quail M.A."/>
            <person name="Rajandream M.A."/>
            <person name="Rogers J."/>
            <person name="Rutter S."/>
            <person name="Seeger K."/>
            <person name="Skelton S."/>
            <person name="Squares S."/>
            <person name="Squares R."/>
            <person name="Sulston J.E."/>
            <person name="Taylor K."/>
            <person name="Whitehead S."/>
            <person name="Barrell B.G."/>
        </authorList>
    </citation>
    <scope>NUCLEOTIDE SEQUENCE [LARGE SCALE GENOMIC DNA]</scope>
    <source>
        <strain>ATCC 25618 / H37Rv</strain>
    </source>
</reference>
<reference key="2">
    <citation type="journal article" date="2005" name="FEBS Lett.">
        <title>A novel two-component system found in Mycobacterium tuberculosis.</title>
        <authorList>
            <person name="Morth J.P."/>
            <person name="Gosmann S."/>
            <person name="Nowak E."/>
            <person name="Tucker P.A."/>
        </authorList>
    </citation>
    <scope>FUNCTION</scope>
    <scope>AUTOPHOSPHORYLATION</scope>
    <source>
        <strain>ATCC 25618 / H37Rv</strain>
    </source>
</reference>
<reference key="3">
    <citation type="journal article" date="2008" name="BMC Syst. Biol.">
        <title>targetTB: a target identification pipeline for Mycobacterium tuberculosis through an interactome, reactome and genome-scale structural analysis.</title>
        <authorList>
            <person name="Raman K."/>
            <person name="Yeturu K."/>
            <person name="Chandra N."/>
        </authorList>
    </citation>
    <scope>IDENTIFICATION AS A DRUG TARGET [LARGE SCALE ANALYSIS]</scope>
</reference>
<reference key="4">
    <citation type="journal article" date="2011" name="Mol. Cell. Proteomics">
        <title>Proteogenomic analysis of Mycobacterium tuberculosis by high resolution mass spectrometry.</title>
        <authorList>
            <person name="Kelkar D.S."/>
            <person name="Kumar D."/>
            <person name="Kumar P."/>
            <person name="Balakrishnan L."/>
            <person name="Muthusamy B."/>
            <person name="Yadav A.K."/>
            <person name="Shrivastava P."/>
            <person name="Marimuthu A."/>
            <person name="Anand S."/>
            <person name="Sundaram H."/>
            <person name="Kingsbury R."/>
            <person name="Harsha H.C."/>
            <person name="Nair B."/>
            <person name="Prasad T.S."/>
            <person name="Chauhan D.S."/>
            <person name="Katoch K."/>
            <person name="Katoch V.M."/>
            <person name="Kumar P."/>
            <person name="Chaerkady R."/>
            <person name="Ramachandran S."/>
            <person name="Dash D."/>
            <person name="Pandey A."/>
        </authorList>
    </citation>
    <scope>IDENTIFICATION BY MASS SPECTROMETRY [LARGE SCALE ANALYSIS]</scope>
    <source>
        <strain>ATCC 25618 / H37Rv</strain>
    </source>
</reference>
<reference key="5">
    <citation type="journal article" date="2021" name="FASEB J.">
        <title>Cyclic di-GMP sensing histidine kinase PdtaS controls mycobacterial adaptation to carbon sources.</title>
        <authorList>
            <person name="Hariharan V.N."/>
            <person name="Yadav R."/>
            <person name="Thakur C."/>
            <person name="Singh A."/>
            <person name="Gopinathan R."/>
            <person name="Singh D.P."/>
            <person name="Sankhe G."/>
            <person name="Malhotra V."/>
            <person name="Chandra N."/>
            <person name="Bhatt A."/>
            <person name="Saini D.K."/>
        </authorList>
    </citation>
    <scope>FUNCTION</scope>
    <scope>CATALYTIC ACTIVITY</scope>
    <scope>ACTIVITY REGULATION</scope>
    <scope>DOMAIN</scope>
    <scope>PHOSPHORYLATION AT HIS-303</scope>
    <scope>MUTAGENESIS OF TRP-43 AND HIS-303</scope>
    <source>
        <strain>H37Rv</strain>
    </source>
</reference>
<reference key="6">
    <citation type="journal article" date="2021" name="Elife">
        <title>Integrated sensing of host stresses by inhibition of a cytoplasmic two-component system controls M. tuberculosis acute lung infection.</title>
        <authorList>
            <person name="Buglino J.A."/>
            <person name="Sankhe G.D."/>
            <person name="Lazar N."/>
            <person name="Bean J.M."/>
            <person name="Glickman M.S."/>
        </authorList>
    </citation>
    <scope>FUNCTION IN COPPER AND NO RESISTANCE</scope>
    <scope>ACTIVITY REGULATION</scope>
    <scope>DOMAIN</scope>
    <scope>AUTOPHOSPHORYLATION</scope>
    <scope>MUTAGENESIS OF CYS-53 AND CYS-57</scope>
    <source>
        <strain>Erdman</strain>
    </source>
</reference>
<reference evidence="12 13" key="7">
    <citation type="journal article" date="2012" name="J. Struct. Biol.">
        <title>The sensor region of the ubiquitous cytosolic sensor kinase, PdtaS, contains PAS and GAF domain sensing modules.</title>
        <authorList>
            <person name="Preu J."/>
            <person name="Panjikar S."/>
            <person name="Morth P."/>
            <person name="Jaiswal R."/>
            <person name="Karunakar P."/>
            <person name="Tucker P.A."/>
        </authorList>
    </citation>
    <scope>X-RAY CRYSTALLOGRAPHY (2.00 ANGSTROMS) OF 1-303</scope>
    <scope>SUBUNIT</scope>
    <scope>DOMAIN</scope>
    <source>
        <strain>H37Rv</strain>
    </source>
</reference>
<proteinExistence type="evidence at protein level"/>